<protein>
    <recommendedName>
        <fullName evidence="1">Thiol:disulfide interchange protein DsbD</fullName>
        <ecNumber evidence="1">1.8.1.8</ecNumber>
    </recommendedName>
    <alternativeName>
        <fullName evidence="1">Protein-disulfide reductase</fullName>
        <shortName evidence="1">Disulfide reductase</shortName>
    </alternativeName>
</protein>
<proteinExistence type="inferred from homology"/>
<name>DSBD_COLP3</name>
<comment type="function">
    <text evidence="1">Required to facilitate the formation of correct disulfide bonds in some periplasmic proteins and for the assembly of the periplasmic c-type cytochromes. Acts by transferring electrons from cytoplasmic thioredoxin to the periplasm. This transfer involves a cascade of disulfide bond formation and reduction steps.</text>
</comment>
<comment type="catalytic activity">
    <reaction evidence="1">
        <text>[protein]-dithiol + NAD(+) = [protein]-disulfide + NADH + H(+)</text>
        <dbReference type="Rhea" id="RHEA:18749"/>
        <dbReference type="Rhea" id="RHEA-COMP:10593"/>
        <dbReference type="Rhea" id="RHEA-COMP:10594"/>
        <dbReference type="ChEBI" id="CHEBI:15378"/>
        <dbReference type="ChEBI" id="CHEBI:29950"/>
        <dbReference type="ChEBI" id="CHEBI:50058"/>
        <dbReference type="ChEBI" id="CHEBI:57540"/>
        <dbReference type="ChEBI" id="CHEBI:57945"/>
        <dbReference type="EC" id="1.8.1.8"/>
    </reaction>
</comment>
<comment type="catalytic activity">
    <reaction evidence="1">
        <text>[protein]-dithiol + NADP(+) = [protein]-disulfide + NADPH + H(+)</text>
        <dbReference type="Rhea" id="RHEA:18753"/>
        <dbReference type="Rhea" id="RHEA-COMP:10593"/>
        <dbReference type="Rhea" id="RHEA-COMP:10594"/>
        <dbReference type="ChEBI" id="CHEBI:15378"/>
        <dbReference type="ChEBI" id="CHEBI:29950"/>
        <dbReference type="ChEBI" id="CHEBI:50058"/>
        <dbReference type="ChEBI" id="CHEBI:57783"/>
        <dbReference type="ChEBI" id="CHEBI:58349"/>
        <dbReference type="EC" id="1.8.1.8"/>
    </reaction>
</comment>
<comment type="subcellular location">
    <subcellularLocation>
        <location evidence="1">Cell inner membrane</location>
        <topology evidence="1">Multi-pass membrane protein</topology>
    </subcellularLocation>
</comment>
<comment type="similarity">
    <text evidence="1">Belongs to the thioredoxin family. DsbD subfamily.</text>
</comment>
<sequence length="608" mass="66804">MKNLLSLCFLMLAAFTLNPAAAQEKQSIFDVSNSSLFSNDDEFLKVDQAFAFNFYQKNNLLEVSFDIAPEYYLYRHQFKFKGKNTQFTSVLLPDGIDHEDEFFGVQKIFTENLAFTVNLENVSNDASIKITYQGCAEKGLCYPPTSKVIKLSKFILGESTSAPSSDAAQQTNEGEVKKSEQHQLSDMLKQDSLLLTLIAFFVGGLLLSFTPCVFPMYPILTGIIVGQGEGLTTKKAFTLSFFYVQGMAITYTLLGVVVAMAGAKFQAVFQHPIVLIGLSILFIFLALSMFGVFNLALPASWQNKLNNVSNKQKGGSITGVLMMGVISGLVASPCTTAPLTGALLYISQTGDVVLGASALYALSLGMGLPLLILGSSGGKLLPKAGAWMNIIKNIFGLLLLAVPVFLLERFIPEVASQALWALLILVSASYFYVANQNHAAAQNVQQGKGFWYGLRSLVIFLMLFFGANLAYQLIYPSSNNVTNNAQHASFKQVTSLAQLEDEVKKANMQGKTVMVDLYADWCIACKEFEKYTFVDADVQKALSNSVWLQIDMTEFDSTDNAELVQHYTILGLPSILFFDLQGNELTKQRTTGFMKAAEFSAHVKSIFK</sequence>
<accession>Q487R3</accession>
<reference key="1">
    <citation type="journal article" date="2005" name="Proc. Natl. Acad. Sci. U.S.A.">
        <title>The psychrophilic lifestyle as revealed by the genome sequence of Colwellia psychrerythraea 34H through genomic and proteomic analyses.</title>
        <authorList>
            <person name="Methe B.A."/>
            <person name="Nelson K.E."/>
            <person name="Deming J.W."/>
            <person name="Momen B."/>
            <person name="Melamud E."/>
            <person name="Zhang X."/>
            <person name="Moult J."/>
            <person name="Madupu R."/>
            <person name="Nelson W.C."/>
            <person name="Dodson R.J."/>
            <person name="Brinkac L.M."/>
            <person name="Daugherty S.C."/>
            <person name="Durkin A.S."/>
            <person name="DeBoy R.T."/>
            <person name="Kolonay J.F."/>
            <person name="Sullivan S.A."/>
            <person name="Zhou L."/>
            <person name="Davidsen T.M."/>
            <person name="Wu M."/>
            <person name="Huston A.L."/>
            <person name="Lewis M."/>
            <person name="Weaver B."/>
            <person name="Weidman J.F."/>
            <person name="Khouri H."/>
            <person name="Utterback T.R."/>
            <person name="Feldblyum T.V."/>
            <person name="Fraser C.M."/>
        </authorList>
    </citation>
    <scope>NUCLEOTIDE SEQUENCE [LARGE SCALE GENOMIC DNA]</scope>
    <source>
        <strain>34H / ATCC BAA-681</strain>
    </source>
</reference>
<organism>
    <name type="scientific">Colwellia psychrerythraea (strain 34H / ATCC BAA-681)</name>
    <name type="common">Vibrio psychroerythus</name>
    <dbReference type="NCBI Taxonomy" id="167879"/>
    <lineage>
        <taxon>Bacteria</taxon>
        <taxon>Pseudomonadati</taxon>
        <taxon>Pseudomonadota</taxon>
        <taxon>Gammaproteobacteria</taxon>
        <taxon>Alteromonadales</taxon>
        <taxon>Colwelliaceae</taxon>
        <taxon>Colwellia</taxon>
    </lineage>
</organism>
<feature type="signal peptide" evidence="1">
    <location>
        <begin position="1"/>
        <end position="22"/>
    </location>
</feature>
<feature type="chain" id="PRO_0000304384" description="Thiol:disulfide interchange protein DsbD">
    <location>
        <begin position="23"/>
        <end position="608"/>
    </location>
</feature>
<feature type="transmembrane region" description="Helical" evidence="1">
    <location>
        <begin position="194"/>
        <end position="214"/>
    </location>
</feature>
<feature type="transmembrane region" description="Helical" evidence="1">
    <location>
        <begin position="241"/>
        <end position="261"/>
    </location>
</feature>
<feature type="transmembrane region" description="Helical" evidence="1">
    <location>
        <begin position="273"/>
        <end position="293"/>
    </location>
</feature>
<feature type="transmembrane region" description="Helical" evidence="1">
    <location>
        <begin position="314"/>
        <end position="334"/>
    </location>
</feature>
<feature type="transmembrane region" description="Helical" evidence="1">
    <location>
        <begin position="352"/>
        <end position="372"/>
    </location>
</feature>
<feature type="transmembrane region" description="Helical" evidence="1">
    <location>
        <begin position="387"/>
        <end position="407"/>
    </location>
</feature>
<feature type="transmembrane region" description="Helical" evidence="1">
    <location>
        <begin position="414"/>
        <end position="434"/>
    </location>
</feature>
<feature type="transmembrane region" description="Helical" evidence="1">
    <location>
        <begin position="456"/>
        <end position="476"/>
    </location>
</feature>
<feature type="domain" description="Thioredoxin" evidence="1">
    <location>
        <begin position="469"/>
        <end position="608"/>
    </location>
</feature>
<feature type="region of interest" description="Disordered" evidence="2">
    <location>
        <begin position="161"/>
        <end position="180"/>
    </location>
</feature>
<feature type="compositionally biased region" description="Polar residues" evidence="2">
    <location>
        <begin position="161"/>
        <end position="173"/>
    </location>
</feature>
<feature type="disulfide bond" description="Redox-active" evidence="1">
    <location>
        <begin position="135"/>
        <end position="141"/>
    </location>
</feature>
<feature type="disulfide bond" description="Redox-active" evidence="1">
    <location>
        <begin position="212"/>
        <end position="334"/>
    </location>
</feature>
<feature type="disulfide bond" description="Redox-active" evidence="1">
    <location>
        <begin position="522"/>
        <end position="525"/>
    </location>
</feature>
<keyword id="KW-0997">Cell inner membrane</keyword>
<keyword id="KW-1003">Cell membrane</keyword>
<keyword id="KW-0201">Cytochrome c-type biogenesis</keyword>
<keyword id="KW-1015">Disulfide bond</keyword>
<keyword id="KW-0249">Electron transport</keyword>
<keyword id="KW-0472">Membrane</keyword>
<keyword id="KW-0520">NAD</keyword>
<keyword id="KW-0560">Oxidoreductase</keyword>
<keyword id="KW-0676">Redox-active center</keyword>
<keyword id="KW-0732">Signal</keyword>
<keyword id="KW-0812">Transmembrane</keyword>
<keyword id="KW-1133">Transmembrane helix</keyword>
<keyword id="KW-0813">Transport</keyword>
<gene>
    <name evidence="1" type="primary">dsbD</name>
    <name type="ordered locus">CPS_0953</name>
</gene>
<evidence type="ECO:0000255" key="1">
    <source>
        <dbReference type="HAMAP-Rule" id="MF_00399"/>
    </source>
</evidence>
<evidence type="ECO:0000256" key="2">
    <source>
        <dbReference type="SAM" id="MobiDB-lite"/>
    </source>
</evidence>
<dbReference type="EC" id="1.8.1.8" evidence="1"/>
<dbReference type="EMBL" id="CP000083">
    <property type="protein sequence ID" value="AAZ24775.1"/>
    <property type="molecule type" value="Genomic_DNA"/>
</dbReference>
<dbReference type="RefSeq" id="WP_011041796.1">
    <property type="nucleotide sequence ID" value="NC_003910.7"/>
</dbReference>
<dbReference type="SMR" id="Q487R3"/>
<dbReference type="STRING" id="167879.CPS_0953"/>
<dbReference type="KEGG" id="cps:CPS_0953"/>
<dbReference type="eggNOG" id="COG4232">
    <property type="taxonomic scope" value="Bacteria"/>
</dbReference>
<dbReference type="HOGENOM" id="CLU_014657_2_0_6"/>
<dbReference type="Proteomes" id="UP000000547">
    <property type="component" value="Chromosome"/>
</dbReference>
<dbReference type="GO" id="GO:0005886">
    <property type="term" value="C:plasma membrane"/>
    <property type="evidence" value="ECO:0007669"/>
    <property type="project" value="UniProtKB-SubCell"/>
</dbReference>
<dbReference type="GO" id="GO:0009055">
    <property type="term" value="F:electron transfer activity"/>
    <property type="evidence" value="ECO:0007669"/>
    <property type="project" value="UniProtKB-UniRule"/>
</dbReference>
<dbReference type="GO" id="GO:0047134">
    <property type="term" value="F:protein-disulfide reductase [NAD(P)H] activity"/>
    <property type="evidence" value="ECO:0007669"/>
    <property type="project" value="UniProtKB-UniRule"/>
</dbReference>
<dbReference type="GO" id="GO:0045454">
    <property type="term" value="P:cell redox homeostasis"/>
    <property type="evidence" value="ECO:0007669"/>
    <property type="project" value="TreeGrafter"/>
</dbReference>
<dbReference type="GO" id="GO:0017004">
    <property type="term" value="P:cytochrome complex assembly"/>
    <property type="evidence" value="ECO:0007669"/>
    <property type="project" value="UniProtKB-UniRule"/>
</dbReference>
<dbReference type="CDD" id="cd02953">
    <property type="entry name" value="DsbDgamma"/>
    <property type="match status" value="1"/>
</dbReference>
<dbReference type="Gene3D" id="3.40.30.10">
    <property type="entry name" value="Glutaredoxin"/>
    <property type="match status" value="1"/>
</dbReference>
<dbReference type="Gene3D" id="2.60.40.1250">
    <property type="entry name" value="Thiol:disulfide interchange protein DsbD, N-terminal domain"/>
    <property type="match status" value="1"/>
</dbReference>
<dbReference type="HAMAP" id="MF_00399">
    <property type="entry name" value="DbsD"/>
    <property type="match status" value="1"/>
</dbReference>
<dbReference type="InterPro" id="IPR003834">
    <property type="entry name" value="Cyt_c_assmbl_TM_dom"/>
</dbReference>
<dbReference type="InterPro" id="IPR035671">
    <property type="entry name" value="DsbD_gamma"/>
</dbReference>
<dbReference type="InterPro" id="IPR028250">
    <property type="entry name" value="DsbDN"/>
</dbReference>
<dbReference type="InterPro" id="IPR036929">
    <property type="entry name" value="DsbDN_sf"/>
</dbReference>
<dbReference type="InterPro" id="IPR022910">
    <property type="entry name" value="Thiol_diS_interchange_DbsD"/>
</dbReference>
<dbReference type="InterPro" id="IPR036249">
    <property type="entry name" value="Thioredoxin-like_sf"/>
</dbReference>
<dbReference type="InterPro" id="IPR013766">
    <property type="entry name" value="Thioredoxin_domain"/>
</dbReference>
<dbReference type="NCBIfam" id="NF001419">
    <property type="entry name" value="PRK00293.1"/>
    <property type="match status" value="1"/>
</dbReference>
<dbReference type="PANTHER" id="PTHR32234">
    <property type="entry name" value="THIOL:DISULFIDE INTERCHANGE PROTEIN DSBD"/>
    <property type="match status" value="1"/>
</dbReference>
<dbReference type="PANTHER" id="PTHR32234:SF0">
    <property type="entry name" value="THIOL:DISULFIDE INTERCHANGE PROTEIN DSBD"/>
    <property type="match status" value="1"/>
</dbReference>
<dbReference type="Pfam" id="PF11412">
    <property type="entry name" value="DsbD_N"/>
    <property type="match status" value="1"/>
</dbReference>
<dbReference type="Pfam" id="PF02683">
    <property type="entry name" value="DsbD_TM"/>
    <property type="match status" value="1"/>
</dbReference>
<dbReference type="Pfam" id="PF13899">
    <property type="entry name" value="Thioredoxin_7"/>
    <property type="match status" value="1"/>
</dbReference>
<dbReference type="SUPFAM" id="SSF74863">
    <property type="entry name" value="Thiol:disulfide interchange protein DsbD, N-terminal domain (DsbD-alpha)"/>
    <property type="match status" value="1"/>
</dbReference>
<dbReference type="SUPFAM" id="SSF52833">
    <property type="entry name" value="Thioredoxin-like"/>
    <property type="match status" value="1"/>
</dbReference>
<dbReference type="PROSITE" id="PS51352">
    <property type="entry name" value="THIOREDOXIN_2"/>
    <property type="match status" value="1"/>
</dbReference>